<reference key="1">
    <citation type="journal article" date="2010" name="J. Bacteriol.">
        <title>Whole genome sequences of two Xylella fastidiosa strains (M12 and M23) causing almond leaf scorch disease in California.</title>
        <authorList>
            <person name="Chen J."/>
            <person name="Xie G."/>
            <person name="Han S."/>
            <person name="Chertkov O."/>
            <person name="Sims D."/>
            <person name="Civerolo E.L."/>
        </authorList>
    </citation>
    <scope>NUCLEOTIDE SEQUENCE [LARGE SCALE GENOMIC DNA]</scope>
    <source>
        <strain>M12</strain>
    </source>
</reference>
<comment type="catalytic activity">
    <reaction evidence="1">
        <text>tRNA(Leu) + L-leucine + ATP = L-leucyl-tRNA(Leu) + AMP + diphosphate</text>
        <dbReference type="Rhea" id="RHEA:11688"/>
        <dbReference type="Rhea" id="RHEA-COMP:9613"/>
        <dbReference type="Rhea" id="RHEA-COMP:9622"/>
        <dbReference type="ChEBI" id="CHEBI:30616"/>
        <dbReference type="ChEBI" id="CHEBI:33019"/>
        <dbReference type="ChEBI" id="CHEBI:57427"/>
        <dbReference type="ChEBI" id="CHEBI:78442"/>
        <dbReference type="ChEBI" id="CHEBI:78494"/>
        <dbReference type="ChEBI" id="CHEBI:456215"/>
        <dbReference type="EC" id="6.1.1.4"/>
    </reaction>
</comment>
<comment type="subcellular location">
    <subcellularLocation>
        <location evidence="1">Cytoplasm</location>
    </subcellularLocation>
</comment>
<comment type="similarity">
    <text evidence="1">Belongs to the class-I aminoacyl-tRNA synthetase family.</text>
</comment>
<protein>
    <recommendedName>
        <fullName evidence="1">Leucine--tRNA ligase</fullName>
        <ecNumber evidence="1">6.1.1.4</ecNumber>
    </recommendedName>
    <alternativeName>
        <fullName evidence="1">Leucyl-tRNA synthetase</fullName>
        <shortName evidence="1">LeuRS</shortName>
    </alternativeName>
</protein>
<dbReference type="EC" id="6.1.1.4" evidence="1"/>
<dbReference type="EMBL" id="CP000941">
    <property type="protein sequence ID" value="ACA12305.1"/>
    <property type="molecule type" value="Genomic_DNA"/>
</dbReference>
<dbReference type="RefSeq" id="WP_012337931.1">
    <property type="nucleotide sequence ID" value="NC_010513.1"/>
</dbReference>
<dbReference type="SMR" id="B0U376"/>
<dbReference type="KEGG" id="xfm:Xfasm12_1376"/>
<dbReference type="HOGENOM" id="CLU_004427_0_0_6"/>
<dbReference type="GO" id="GO:0005829">
    <property type="term" value="C:cytosol"/>
    <property type="evidence" value="ECO:0007669"/>
    <property type="project" value="TreeGrafter"/>
</dbReference>
<dbReference type="GO" id="GO:0002161">
    <property type="term" value="F:aminoacyl-tRNA deacylase activity"/>
    <property type="evidence" value="ECO:0007669"/>
    <property type="project" value="InterPro"/>
</dbReference>
<dbReference type="GO" id="GO:0005524">
    <property type="term" value="F:ATP binding"/>
    <property type="evidence" value="ECO:0007669"/>
    <property type="project" value="UniProtKB-UniRule"/>
</dbReference>
<dbReference type="GO" id="GO:0004823">
    <property type="term" value="F:leucine-tRNA ligase activity"/>
    <property type="evidence" value="ECO:0007669"/>
    <property type="project" value="UniProtKB-UniRule"/>
</dbReference>
<dbReference type="GO" id="GO:0006429">
    <property type="term" value="P:leucyl-tRNA aminoacylation"/>
    <property type="evidence" value="ECO:0007669"/>
    <property type="project" value="UniProtKB-UniRule"/>
</dbReference>
<dbReference type="CDD" id="cd07958">
    <property type="entry name" value="Anticodon_Ia_Leu_BEm"/>
    <property type="match status" value="1"/>
</dbReference>
<dbReference type="CDD" id="cd00812">
    <property type="entry name" value="LeuRS_core"/>
    <property type="match status" value="1"/>
</dbReference>
<dbReference type="FunFam" id="1.10.730.10:FF:000003">
    <property type="entry name" value="Leucine--tRNA ligase"/>
    <property type="match status" value="1"/>
</dbReference>
<dbReference type="FunFam" id="2.20.28.290:FF:000001">
    <property type="entry name" value="Leucine--tRNA ligase"/>
    <property type="match status" value="1"/>
</dbReference>
<dbReference type="FunFam" id="3.10.20.590:FF:000001">
    <property type="entry name" value="Leucine--tRNA ligase"/>
    <property type="match status" value="1"/>
</dbReference>
<dbReference type="FunFam" id="3.40.50.620:FF:000003">
    <property type="entry name" value="Leucine--tRNA ligase"/>
    <property type="match status" value="1"/>
</dbReference>
<dbReference type="FunFam" id="3.40.50.620:FF:000124">
    <property type="entry name" value="Leucine--tRNA ligase"/>
    <property type="match status" value="1"/>
</dbReference>
<dbReference type="FunFam" id="3.90.740.10:FF:000012">
    <property type="entry name" value="Leucine--tRNA ligase"/>
    <property type="match status" value="1"/>
</dbReference>
<dbReference type="Gene3D" id="2.20.28.290">
    <property type="match status" value="1"/>
</dbReference>
<dbReference type="Gene3D" id="3.10.20.590">
    <property type="match status" value="1"/>
</dbReference>
<dbReference type="Gene3D" id="3.40.50.620">
    <property type="entry name" value="HUPs"/>
    <property type="match status" value="2"/>
</dbReference>
<dbReference type="Gene3D" id="1.10.730.10">
    <property type="entry name" value="Isoleucyl-tRNA Synthetase, Domain 1"/>
    <property type="match status" value="1"/>
</dbReference>
<dbReference type="Gene3D" id="3.90.740.10">
    <property type="entry name" value="Valyl/Leucyl/Isoleucyl-tRNA synthetase, editing domain"/>
    <property type="match status" value="1"/>
</dbReference>
<dbReference type="HAMAP" id="MF_00049_B">
    <property type="entry name" value="Leu_tRNA_synth_B"/>
    <property type="match status" value="1"/>
</dbReference>
<dbReference type="InterPro" id="IPR001412">
    <property type="entry name" value="aa-tRNA-synth_I_CS"/>
</dbReference>
<dbReference type="InterPro" id="IPR002300">
    <property type="entry name" value="aa-tRNA-synth_Ia"/>
</dbReference>
<dbReference type="InterPro" id="IPR002302">
    <property type="entry name" value="Leu-tRNA-ligase"/>
</dbReference>
<dbReference type="InterPro" id="IPR025709">
    <property type="entry name" value="Leu_tRNA-synth_edit"/>
</dbReference>
<dbReference type="InterPro" id="IPR013155">
    <property type="entry name" value="M/V/L/I-tRNA-synth_anticd-bd"/>
</dbReference>
<dbReference type="InterPro" id="IPR015413">
    <property type="entry name" value="Methionyl/Leucyl_tRNA_Synth"/>
</dbReference>
<dbReference type="InterPro" id="IPR014729">
    <property type="entry name" value="Rossmann-like_a/b/a_fold"/>
</dbReference>
<dbReference type="InterPro" id="IPR009080">
    <property type="entry name" value="tRNAsynth_Ia_anticodon-bd"/>
</dbReference>
<dbReference type="InterPro" id="IPR009008">
    <property type="entry name" value="Val/Leu/Ile-tRNA-synth_edit"/>
</dbReference>
<dbReference type="NCBIfam" id="TIGR00396">
    <property type="entry name" value="leuS_bact"/>
    <property type="match status" value="1"/>
</dbReference>
<dbReference type="PANTHER" id="PTHR43740:SF2">
    <property type="entry name" value="LEUCINE--TRNA LIGASE, MITOCHONDRIAL"/>
    <property type="match status" value="1"/>
</dbReference>
<dbReference type="PANTHER" id="PTHR43740">
    <property type="entry name" value="LEUCYL-TRNA SYNTHETASE"/>
    <property type="match status" value="1"/>
</dbReference>
<dbReference type="Pfam" id="PF08264">
    <property type="entry name" value="Anticodon_1"/>
    <property type="match status" value="1"/>
</dbReference>
<dbReference type="Pfam" id="PF00133">
    <property type="entry name" value="tRNA-synt_1"/>
    <property type="match status" value="2"/>
</dbReference>
<dbReference type="Pfam" id="PF13603">
    <property type="entry name" value="tRNA-synt_1_2"/>
    <property type="match status" value="1"/>
</dbReference>
<dbReference type="Pfam" id="PF09334">
    <property type="entry name" value="tRNA-synt_1g"/>
    <property type="match status" value="1"/>
</dbReference>
<dbReference type="PRINTS" id="PR00985">
    <property type="entry name" value="TRNASYNTHLEU"/>
</dbReference>
<dbReference type="SUPFAM" id="SSF47323">
    <property type="entry name" value="Anticodon-binding domain of a subclass of class I aminoacyl-tRNA synthetases"/>
    <property type="match status" value="1"/>
</dbReference>
<dbReference type="SUPFAM" id="SSF52374">
    <property type="entry name" value="Nucleotidylyl transferase"/>
    <property type="match status" value="1"/>
</dbReference>
<dbReference type="SUPFAM" id="SSF50677">
    <property type="entry name" value="ValRS/IleRS/LeuRS editing domain"/>
    <property type="match status" value="1"/>
</dbReference>
<dbReference type="PROSITE" id="PS00178">
    <property type="entry name" value="AA_TRNA_LIGASE_I"/>
    <property type="match status" value="1"/>
</dbReference>
<accession>B0U376</accession>
<feature type="chain" id="PRO_1000091381" description="Leucine--tRNA ligase">
    <location>
        <begin position="1"/>
        <end position="879"/>
    </location>
</feature>
<feature type="short sequence motif" description="'HIGH' region">
    <location>
        <begin position="45"/>
        <end position="55"/>
    </location>
</feature>
<feature type="short sequence motif" description="'KMSKS' region">
    <location>
        <begin position="637"/>
        <end position="641"/>
    </location>
</feature>
<feature type="binding site" evidence="1">
    <location>
        <position position="640"/>
    </location>
    <ligand>
        <name>ATP</name>
        <dbReference type="ChEBI" id="CHEBI:30616"/>
    </ligand>
</feature>
<keyword id="KW-0030">Aminoacyl-tRNA synthetase</keyword>
<keyword id="KW-0067">ATP-binding</keyword>
<keyword id="KW-0963">Cytoplasm</keyword>
<keyword id="KW-0436">Ligase</keyword>
<keyword id="KW-0547">Nucleotide-binding</keyword>
<keyword id="KW-0648">Protein biosynthesis</keyword>
<gene>
    <name evidence="1" type="primary">leuS</name>
    <name type="ordered locus">Xfasm12_1376</name>
</gene>
<name>SYL_XYLFM</name>
<proteinExistence type="inferred from homology"/>
<organism>
    <name type="scientific">Xylella fastidiosa (strain M12)</name>
    <dbReference type="NCBI Taxonomy" id="405440"/>
    <lineage>
        <taxon>Bacteria</taxon>
        <taxon>Pseudomonadati</taxon>
        <taxon>Pseudomonadota</taxon>
        <taxon>Gammaproteobacteria</taxon>
        <taxon>Lysobacterales</taxon>
        <taxon>Lysobacteraceae</taxon>
        <taxon>Xylella</taxon>
    </lineage>
</organism>
<evidence type="ECO:0000255" key="1">
    <source>
        <dbReference type="HAMAP-Rule" id="MF_00049"/>
    </source>
</evidence>
<sequence length="879" mass="99798">MPTEANTYDPQRIESIAQHYWDSTHAFEVNEHSNKPKYYCLSMLPYPSGALHMGHVRNYTIGDVISRYKRMTGHNVLQPMGWDAFGLPAENAAIKNKVAPAQWTYKNIERMRTQLKSLGYAINWSREFATCQPDYYVHEQHMFTRLMRKGLAYRRNALVNWDPVDQTVLANEQVIDGRGWRSGAPVEKREIPQWFLRITDYAQELLDGLNTLDDWPEPVKTMQRNWIGRSEGLEIRFEVRDVDNNALEALRVFTTRPDTLFGVTFVSIAPEHPLALHAAKSNPGLAGLLTQMKQGGLSEAELKTQEKRGMDTGLKAIHPITNEQLPVWVANFVLMAYGTGAVMAVPGHDQRDQEFANKYGLPIRQVIALKEPKNQDESTWEPDVWRDWYADKTREFELINSAEFDGLDYQGAFEVLVERFERQGRGQRRVNYRLRDWGVSRQRYWGCPIPVIYCPTCGAVPVPENQLPVILPENVAFSGTGSPIKTDSEWRKTTCPECGGPAERETDTFDTFMESSWYYARYTSPNAREMLDKRANYWLPVDQYIGGIEHAILHLMYFRFYHKLMRDARLVDSDEPAINLLTQGMVIAETFYRKNPDGSKDWINPADVNVECDERGRITGATLISDGQPVLIGATEKMSKSKNNGVDPQIMVTKYGADTVRLFSMFAAPPEQSLEWNEAGVEGMARFLRRLWTQVHHHASHGPATALDITALDTAQKAIRCKTHNTIARVEDDYGRRRSFNTAIAAVMELSNTLARFDDTTTQSHAVRQEALETMVLLLNPITPHTSHALWQTLGHPETLLEDLPFPKVDTTALVRETATLAVQVNGKLRGTIEVATDAPREHIENNALTEPNTARFLEGLTVLKIIIVPGKIVNIVAR</sequence>